<gene>
    <name evidence="1" type="primary">nuoA</name>
    <name type="ordered locus">Noc_1127</name>
</gene>
<feature type="chain" id="PRO_0000362706" description="NADH-quinone oxidoreductase subunit A">
    <location>
        <begin position="1"/>
        <end position="129"/>
    </location>
</feature>
<feature type="transmembrane region" description="Helical" evidence="1">
    <location>
        <begin position="6"/>
        <end position="26"/>
    </location>
</feature>
<feature type="transmembrane region" description="Helical" evidence="1">
    <location>
        <begin position="63"/>
        <end position="83"/>
    </location>
</feature>
<feature type="transmembrane region" description="Helical" evidence="1">
    <location>
        <begin position="89"/>
        <end position="109"/>
    </location>
</feature>
<keyword id="KW-0997">Cell inner membrane</keyword>
<keyword id="KW-1003">Cell membrane</keyword>
<keyword id="KW-0472">Membrane</keyword>
<keyword id="KW-0520">NAD</keyword>
<keyword id="KW-0874">Quinone</keyword>
<keyword id="KW-1185">Reference proteome</keyword>
<keyword id="KW-1278">Translocase</keyword>
<keyword id="KW-0812">Transmembrane</keyword>
<keyword id="KW-1133">Transmembrane helix</keyword>
<keyword id="KW-0813">Transport</keyword>
<keyword id="KW-0830">Ubiquinone</keyword>
<name>NUOA_NITOC</name>
<reference key="1">
    <citation type="journal article" date="2006" name="Appl. Environ. Microbiol.">
        <title>Complete genome sequence of the marine, chemolithoautotrophic, ammonia-oxidizing bacterium Nitrosococcus oceani ATCC 19707.</title>
        <authorList>
            <person name="Klotz M.G."/>
            <person name="Arp D.J."/>
            <person name="Chain P.S.G."/>
            <person name="El-Sheikh A.F."/>
            <person name="Hauser L.J."/>
            <person name="Hommes N.G."/>
            <person name="Larimer F.W."/>
            <person name="Malfatti S.A."/>
            <person name="Norton J.M."/>
            <person name="Poret-Peterson A.T."/>
            <person name="Vergez L.M."/>
            <person name="Ward B.B."/>
        </authorList>
    </citation>
    <scope>NUCLEOTIDE SEQUENCE [LARGE SCALE GENOMIC DNA]</scope>
    <source>
        <strain>ATCC 19707 / BCRC 17464 / JCM 30415 / NCIMB 11848 / C-107</strain>
    </source>
</reference>
<proteinExistence type="inferred from homology"/>
<comment type="function">
    <text evidence="1">NDH-1 shuttles electrons from NADH, via FMN and iron-sulfur (Fe-S) centers, to quinones in the respiratory chain. The immediate electron acceptor for the enzyme in this species is believed to be ubiquinone. Couples the redox reaction to proton translocation (for every two electrons transferred, four hydrogen ions are translocated across the cytoplasmic membrane), and thus conserves the redox energy in a proton gradient.</text>
</comment>
<comment type="catalytic activity">
    <reaction evidence="1">
        <text>a quinone + NADH + 5 H(+)(in) = a quinol + NAD(+) + 4 H(+)(out)</text>
        <dbReference type="Rhea" id="RHEA:57888"/>
        <dbReference type="ChEBI" id="CHEBI:15378"/>
        <dbReference type="ChEBI" id="CHEBI:24646"/>
        <dbReference type="ChEBI" id="CHEBI:57540"/>
        <dbReference type="ChEBI" id="CHEBI:57945"/>
        <dbReference type="ChEBI" id="CHEBI:132124"/>
    </reaction>
</comment>
<comment type="subunit">
    <text evidence="1">NDH-1 is composed of 14 different subunits. Subunits NuoA, H, J, K, L, M, N constitute the membrane sector of the complex.</text>
</comment>
<comment type="subcellular location">
    <subcellularLocation>
        <location evidence="1">Cell inner membrane</location>
        <topology evidence="1">Multi-pass membrane protein</topology>
    </subcellularLocation>
</comment>
<comment type="similarity">
    <text evidence="1">Belongs to the complex I subunit 3 family.</text>
</comment>
<organism>
    <name type="scientific">Nitrosococcus oceani (strain ATCC 19707 / BCRC 17464 / JCM 30415 / NCIMB 11848 / C-107)</name>
    <dbReference type="NCBI Taxonomy" id="323261"/>
    <lineage>
        <taxon>Bacteria</taxon>
        <taxon>Pseudomonadati</taxon>
        <taxon>Pseudomonadota</taxon>
        <taxon>Gammaproteobacteria</taxon>
        <taxon>Chromatiales</taxon>
        <taxon>Chromatiaceae</taxon>
        <taxon>Nitrosococcus</taxon>
    </lineage>
</organism>
<accession>Q3JC15</accession>
<sequence length="129" mass="14754">MQFTEFWPFILYAGMVLVLVALIVGFSYILGQRPRERATDEPFESGVVTVGFARLRFPAKFYLVAVLFVIFDMEAAFIFAWAVAFRETGWIGYGGALAFITILGVALIYEWRVGALDWQPKGRKHKKHR</sequence>
<protein>
    <recommendedName>
        <fullName evidence="1">NADH-quinone oxidoreductase subunit A</fullName>
        <ecNumber evidence="1">7.1.1.-</ecNumber>
    </recommendedName>
    <alternativeName>
        <fullName evidence="1">NADH dehydrogenase I subunit A</fullName>
    </alternativeName>
    <alternativeName>
        <fullName evidence="1">NDH-1 subunit A</fullName>
    </alternativeName>
    <alternativeName>
        <fullName evidence="1">NUO1</fullName>
    </alternativeName>
</protein>
<evidence type="ECO:0000255" key="1">
    <source>
        <dbReference type="HAMAP-Rule" id="MF_01394"/>
    </source>
</evidence>
<dbReference type="EC" id="7.1.1.-" evidence="1"/>
<dbReference type="EMBL" id="CP000127">
    <property type="protein sequence ID" value="ABA57631.1"/>
    <property type="molecule type" value="Genomic_DNA"/>
</dbReference>
<dbReference type="RefSeq" id="WP_002808832.1">
    <property type="nucleotide sequence ID" value="NC_007484.1"/>
</dbReference>
<dbReference type="SMR" id="Q3JC15"/>
<dbReference type="FunCoup" id="Q3JC15">
    <property type="interactions" value="187"/>
</dbReference>
<dbReference type="STRING" id="323261.Noc_1127"/>
<dbReference type="KEGG" id="noc:Noc_1127"/>
<dbReference type="eggNOG" id="COG0838">
    <property type="taxonomic scope" value="Bacteria"/>
</dbReference>
<dbReference type="HOGENOM" id="CLU_119549_2_1_6"/>
<dbReference type="InParanoid" id="Q3JC15"/>
<dbReference type="Proteomes" id="UP000006838">
    <property type="component" value="Chromosome"/>
</dbReference>
<dbReference type="GO" id="GO:0030964">
    <property type="term" value="C:NADH dehydrogenase complex"/>
    <property type="evidence" value="ECO:0007669"/>
    <property type="project" value="TreeGrafter"/>
</dbReference>
<dbReference type="GO" id="GO:0005886">
    <property type="term" value="C:plasma membrane"/>
    <property type="evidence" value="ECO:0007669"/>
    <property type="project" value="UniProtKB-SubCell"/>
</dbReference>
<dbReference type="GO" id="GO:0008137">
    <property type="term" value="F:NADH dehydrogenase (ubiquinone) activity"/>
    <property type="evidence" value="ECO:0007669"/>
    <property type="project" value="InterPro"/>
</dbReference>
<dbReference type="GO" id="GO:0050136">
    <property type="term" value="F:NADH:ubiquinone reductase (non-electrogenic) activity"/>
    <property type="evidence" value="ECO:0007669"/>
    <property type="project" value="UniProtKB-UniRule"/>
</dbReference>
<dbReference type="GO" id="GO:0048038">
    <property type="term" value="F:quinone binding"/>
    <property type="evidence" value="ECO:0007669"/>
    <property type="project" value="UniProtKB-KW"/>
</dbReference>
<dbReference type="Gene3D" id="1.20.58.1610">
    <property type="entry name" value="NADH:ubiquinone/plastoquinone oxidoreductase, chain 3"/>
    <property type="match status" value="1"/>
</dbReference>
<dbReference type="HAMAP" id="MF_01394">
    <property type="entry name" value="NDH1_NuoA"/>
    <property type="match status" value="1"/>
</dbReference>
<dbReference type="InterPro" id="IPR023043">
    <property type="entry name" value="NAD(P)H_OxRDtase_bac/plastid"/>
</dbReference>
<dbReference type="InterPro" id="IPR000440">
    <property type="entry name" value="NADH_UbQ/plastoQ_OxRdtase_su3"/>
</dbReference>
<dbReference type="InterPro" id="IPR038430">
    <property type="entry name" value="NDAH_ubi_oxred_su3_sf"/>
</dbReference>
<dbReference type="PANTHER" id="PTHR11058:SF21">
    <property type="entry name" value="NADH-QUINONE OXIDOREDUCTASE SUBUNIT A"/>
    <property type="match status" value="1"/>
</dbReference>
<dbReference type="PANTHER" id="PTHR11058">
    <property type="entry name" value="NADH-UBIQUINONE OXIDOREDUCTASE CHAIN 3"/>
    <property type="match status" value="1"/>
</dbReference>
<dbReference type="Pfam" id="PF00507">
    <property type="entry name" value="Oxidored_q4"/>
    <property type="match status" value="1"/>
</dbReference>